<accession>O06719</accession>
<proteinExistence type="evidence at protein level"/>
<gene>
    <name type="primary">gerPC</name>
    <name type="synonym">yisF</name>
    <name type="ordered locus">BSU10700</name>
</gene>
<keyword id="KW-0309">Germination</keyword>
<keyword id="KW-1185">Reference proteome</keyword>
<keyword id="KW-0749">Sporulation</keyword>
<comment type="function">
    <text>Required for the formation of functionally normal spores. Could be involved in the establishment of normal spore coat structure and/or permeability, which allows the access of germinants to their receptor.</text>
</comment>
<comment type="developmental stage">
    <text>Expressed during sporulation, around the time of spore coat synthesis and assembly, in mother cell compartment.</text>
</comment>
<comment type="induction">
    <text>Expression is sigma K-dependent and negatively regulated by GerE.</text>
</comment>
<name>GERPC_BACSU</name>
<reference key="1">
    <citation type="journal article" date="1997" name="Microbiology">
        <title>Sequencing of regions downstream of addA (98 degrees) and citG (289 degrees) in Bacillus subtilis.</title>
        <authorList>
            <person name="Medina N."/>
            <person name="Vannier F."/>
            <person name="Roche B."/>
            <person name="Autret S."/>
            <person name="Levine A."/>
            <person name="Seror S.J."/>
        </authorList>
    </citation>
    <scope>NUCLEOTIDE SEQUENCE [GENOMIC DNA]</scope>
    <source>
        <strain>168</strain>
    </source>
</reference>
<reference key="2">
    <citation type="journal article" date="1997" name="Nature">
        <title>The complete genome sequence of the Gram-positive bacterium Bacillus subtilis.</title>
        <authorList>
            <person name="Kunst F."/>
            <person name="Ogasawara N."/>
            <person name="Moszer I."/>
            <person name="Albertini A.M."/>
            <person name="Alloni G."/>
            <person name="Azevedo V."/>
            <person name="Bertero M.G."/>
            <person name="Bessieres P."/>
            <person name="Bolotin A."/>
            <person name="Borchert S."/>
            <person name="Borriss R."/>
            <person name="Boursier L."/>
            <person name="Brans A."/>
            <person name="Braun M."/>
            <person name="Brignell S.C."/>
            <person name="Bron S."/>
            <person name="Brouillet S."/>
            <person name="Bruschi C.V."/>
            <person name="Caldwell B."/>
            <person name="Capuano V."/>
            <person name="Carter N.M."/>
            <person name="Choi S.-K."/>
            <person name="Codani J.-J."/>
            <person name="Connerton I.F."/>
            <person name="Cummings N.J."/>
            <person name="Daniel R.A."/>
            <person name="Denizot F."/>
            <person name="Devine K.M."/>
            <person name="Duesterhoeft A."/>
            <person name="Ehrlich S.D."/>
            <person name="Emmerson P.T."/>
            <person name="Entian K.-D."/>
            <person name="Errington J."/>
            <person name="Fabret C."/>
            <person name="Ferrari E."/>
            <person name="Foulger D."/>
            <person name="Fritz C."/>
            <person name="Fujita M."/>
            <person name="Fujita Y."/>
            <person name="Fuma S."/>
            <person name="Galizzi A."/>
            <person name="Galleron N."/>
            <person name="Ghim S.-Y."/>
            <person name="Glaser P."/>
            <person name="Goffeau A."/>
            <person name="Golightly E.J."/>
            <person name="Grandi G."/>
            <person name="Guiseppi G."/>
            <person name="Guy B.J."/>
            <person name="Haga K."/>
            <person name="Haiech J."/>
            <person name="Harwood C.R."/>
            <person name="Henaut A."/>
            <person name="Hilbert H."/>
            <person name="Holsappel S."/>
            <person name="Hosono S."/>
            <person name="Hullo M.-F."/>
            <person name="Itaya M."/>
            <person name="Jones L.-M."/>
            <person name="Joris B."/>
            <person name="Karamata D."/>
            <person name="Kasahara Y."/>
            <person name="Klaerr-Blanchard M."/>
            <person name="Klein C."/>
            <person name="Kobayashi Y."/>
            <person name="Koetter P."/>
            <person name="Koningstein G."/>
            <person name="Krogh S."/>
            <person name="Kumano M."/>
            <person name="Kurita K."/>
            <person name="Lapidus A."/>
            <person name="Lardinois S."/>
            <person name="Lauber J."/>
            <person name="Lazarevic V."/>
            <person name="Lee S.-M."/>
            <person name="Levine A."/>
            <person name="Liu H."/>
            <person name="Masuda S."/>
            <person name="Mauel C."/>
            <person name="Medigue C."/>
            <person name="Medina N."/>
            <person name="Mellado R.P."/>
            <person name="Mizuno M."/>
            <person name="Moestl D."/>
            <person name="Nakai S."/>
            <person name="Noback M."/>
            <person name="Noone D."/>
            <person name="O'Reilly M."/>
            <person name="Ogawa K."/>
            <person name="Ogiwara A."/>
            <person name="Oudega B."/>
            <person name="Park S.-H."/>
            <person name="Parro V."/>
            <person name="Pohl T.M."/>
            <person name="Portetelle D."/>
            <person name="Porwollik S."/>
            <person name="Prescott A.M."/>
            <person name="Presecan E."/>
            <person name="Pujic P."/>
            <person name="Purnelle B."/>
            <person name="Rapoport G."/>
            <person name="Rey M."/>
            <person name="Reynolds S."/>
            <person name="Rieger M."/>
            <person name="Rivolta C."/>
            <person name="Rocha E."/>
            <person name="Roche B."/>
            <person name="Rose M."/>
            <person name="Sadaie Y."/>
            <person name="Sato T."/>
            <person name="Scanlan E."/>
            <person name="Schleich S."/>
            <person name="Schroeter R."/>
            <person name="Scoffone F."/>
            <person name="Sekiguchi J."/>
            <person name="Sekowska A."/>
            <person name="Seror S.J."/>
            <person name="Serror P."/>
            <person name="Shin B.-S."/>
            <person name="Soldo B."/>
            <person name="Sorokin A."/>
            <person name="Tacconi E."/>
            <person name="Takagi T."/>
            <person name="Takahashi H."/>
            <person name="Takemaru K."/>
            <person name="Takeuchi M."/>
            <person name="Tamakoshi A."/>
            <person name="Tanaka T."/>
            <person name="Terpstra P."/>
            <person name="Tognoni A."/>
            <person name="Tosato V."/>
            <person name="Uchiyama S."/>
            <person name="Vandenbol M."/>
            <person name="Vannier F."/>
            <person name="Vassarotti A."/>
            <person name="Viari A."/>
            <person name="Wambutt R."/>
            <person name="Wedler E."/>
            <person name="Wedler H."/>
            <person name="Weitzenegger T."/>
            <person name="Winters P."/>
            <person name="Wipat A."/>
            <person name="Yamamoto H."/>
            <person name="Yamane K."/>
            <person name="Yasumoto K."/>
            <person name="Yata K."/>
            <person name="Yoshida K."/>
            <person name="Yoshikawa H.-F."/>
            <person name="Zumstein E."/>
            <person name="Yoshikawa H."/>
            <person name="Danchin A."/>
        </authorList>
    </citation>
    <scope>NUCLEOTIDE SEQUENCE [LARGE SCALE GENOMIC DNA]</scope>
    <source>
        <strain>168</strain>
    </source>
</reference>
<reference key="3">
    <citation type="journal article" date="2000" name="J. Bacteriol.">
        <title>Mutations in the gerP locus of Bacillus subtilis and Bacillus cereus affect access of germinants to their targets in spores.</title>
        <authorList>
            <person name="Behravan J."/>
            <person name="Chirakkal H."/>
            <person name="Masson A."/>
            <person name="Moir A."/>
        </authorList>
    </citation>
    <scope>CHARACTERIZATION</scope>
    <source>
        <strain>168 / 1604</strain>
    </source>
</reference>
<sequence>MYDQSVSSYLQNLNSFVQQQAIHIQQLERQLKEIQTEMNTMKQRPATTIERVEYKFDQLKIERLDGTLNIGLNPTDPNSVQNFDVSQSTPQIGMMQQEESAQLMQQIRQNVDMYLTEEIPDILEQLENQYDSRLDDTNRHHVIEDIRKQMDSRIHYYMSHIKKEENTPPAQYAEHIAEHVKRDVIRAVEHFLEHIPSEMKGDEQA</sequence>
<protein>
    <recommendedName>
        <fullName>Probable spore germination protein GerPC</fullName>
    </recommendedName>
</protein>
<organism>
    <name type="scientific">Bacillus subtilis (strain 168)</name>
    <dbReference type="NCBI Taxonomy" id="224308"/>
    <lineage>
        <taxon>Bacteria</taxon>
        <taxon>Bacillati</taxon>
        <taxon>Bacillota</taxon>
        <taxon>Bacilli</taxon>
        <taxon>Bacillales</taxon>
        <taxon>Bacillaceae</taxon>
        <taxon>Bacillus</taxon>
    </lineage>
</organism>
<feature type="chain" id="PRO_0000087470" description="Probable spore germination protein GerPC">
    <location>
        <begin position="1"/>
        <end position="205"/>
    </location>
</feature>
<dbReference type="EMBL" id="Y09476">
    <property type="protein sequence ID" value="CAA70677.1"/>
    <property type="molecule type" value="Genomic_DNA"/>
</dbReference>
<dbReference type="EMBL" id="AL009126">
    <property type="protein sequence ID" value="CAB12910.1"/>
    <property type="molecule type" value="Genomic_DNA"/>
</dbReference>
<dbReference type="PIR" id="F69836">
    <property type="entry name" value="F69836"/>
</dbReference>
<dbReference type="RefSeq" id="NP_388951.1">
    <property type="nucleotide sequence ID" value="NC_000964.3"/>
</dbReference>
<dbReference type="RefSeq" id="WP_003245548.1">
    <property type="nucleotide sequence ID" value="NZ_OZ025638.1"/>
</dbReference>
<dbReference type="SMR" id="O06719"/>
<dbReference type="FunCoup" id="O06719">
    <property type="interactions" value="96"/>
</dbReference>
<dbReference type="STRING" id="224308.BSU10700"/>
<dbReference type="PaxDb" id="224308-BSU10700"/>
<dbReference type="EnsemblBacteria" id="CAB12910">
    <property type="protein sequence ID" value="CAB12910"/>
    <property type="gene ID" value="BSU_10700"/>
</dbReference>
<dbReference type="GeneID" id="939327"/>
<dbReference type="KEGG" id="bsu:BSU10700"/>
<dbReference type="PATRIC" id="fig|224308.179.peg.1150"/>
<dbReference type="eggNOG" id="ENOG50335K6">
    <property type="taxonomic scope" value="Bacteria"/>
</dbReference>
<dbReference type="InParanoid" id="O06719"/>
<dbReference type="OrthoDB" id="2991331at2"/>
<dbReference type="BioCyc" id="BSUB:BSU10700-MONOMER"/>
<dbReference type="Proteomes" id="UP000001570">
    <property type="component" value="Chromosome"/>
</dbReference>
<dbReference type="GO" id="GO:0030435">
    <property type="term" value="P:sporulation resulting in formation of a cellular spore"/>
    <property type="evidence" value="ECO:0007669"/>
    <property type="project" value="UniProtKB-KW"/>
</dbReference>
<dbReference type="InterPro" id="IPR019673">
    <property type="entry name" value="Spore_germination_GerPC"/>
</dbReference>
<dbReference type="Pfam" id="PF10737">
    <property type="entry name" value="GerPC"/>
    <property type="match status" value="1"/>
</dbReference>